<comment type="function">
    <text evidence="1">Contactins mediate cell surface interactions during nervous system development. Involved in the formation of paranodal axo-glial junctions in myelinated peripheral nerves and in the signaling between axons and myelinating glial cells via its association with CNTNAP1. Participates in oligodendrocytes generation by acting as a ligand of NOTCH1. Its association with NOTCH1 promotes NOTCH1 activation through the released notch intracellular domain (NICD) and subsequent translocation to the nucleus. Interaction with TNR induces a repulsion of neurons and an inhibition of neurite outgrowth (By similarity).</text>
</comment>
<comment type="subunit">
    <text evidence="2 3 4">Monomer. Interacts with CNTNAP1 in cis form (By similarity). Binds to the carbonic-anhydrase like domain of PTPRZ1. Interacts with NOTCH1 and TNR. Detected in a complex with NRCAM and PTPRB (By similarity). Interacts with TASOR (By similarity).</text>
</comment>
<comment type="subcellular location">
    <subcellularLocation>
        <location>Cell membrane</location>
        <topology>Lipid-anchor</topology>
        <topology>GPI-anchor</topology>
    </subcellularLocation>
</comment>
<comment type="similarity">
    <text evidence="9">Belongs to the immunoglobulin superfamily. Contactin family.</text>
</comment>
<protein>
    <recommendedName>
        <fullName>Contactin-1</fullName>
    </recommendedName>
    <alternativeName>
        <fullName>Neural cell surface protein F3</fullName>
    </alternativeName>
</protein>
<reference key="1">
    <citation type="journal article" date="1995" name="Gene">
        <title>Cloning of the DNA encoding neural adhesion molecule F3 from bovine brain.</title>
        <authorList>
            <person name="Watanabe K."/>
            <person name="Shimazaki K."/>
            <person name="Hosoya H."/>
            <person name="Fukamauchi F."/>
            <person name="Takenawa T."/>
        </authorList>
    </citation>
    <scope>NUCLEOTIDE SEQUENCE [MRNA]</scope>
    <source>
        <tissue>Brain</tissue>
    </source>
</reference>
<organism>
    <name type="scientific">Bos taurus</name>
    <name type="common">Bovine</name>
    <dbReference type="NCBI Taxonomy" id="9913"/>
    <lineage>
        <taxon>Eukaryota</taxon>
        <taxon>Metazoa</taxon>
        <taxon>Chordata</taxon>
        <taxon>Craniata</taxon>
        <taxon>Vertebrata</taxon>
        <taxon>Euteleostomi</taxon>
        <taxon>Mammalia</taxon>
        <taxon>Eutheria</taxon>
        <taxon>Laurasiatheria</taxon>
        <taxon>Artiodactyla</taxon>
        <taxon>Ruminantia</taxon>
        <taxon>Pecora</taxon>
        <taxon>Bovidae</taxon>
        <taxon>Bovinae</taxon>
        <taxon>Bos</taxon>
    </lineage>
</organism>
<evidence type="ECO:0000250" key="1"/>
<evidence type="ECO:0000250" key="2">
    <source>
        <dbReference type="UniProtKB" id="P12960"/>
    </source>
</evidence>
<evidence type="ECO:0000250" key="3">
    <source>
        <dbReference type="UniProtKB" id="Q12860"/>
    </source>
</evidence>
<evidence type="ECO:0000250" key="4">
    <source>
        <dbReference type="UniProtKB" id="Q63198"/>
    </source>
</evidence>
<evidence type="ECO:0000255" key="5"/>
<evidence type="ECO:0000255" key="6">
    <source>
        <dbReference type="PROSITE-ProRule" id="PRU00114"/>
    </source>
</evidence>
<evidence type="ECO:0000255" key="7">
    <source>
        <dbReference type="PROSITE-ProRule" id="PRU00316"/>
    </source>
</evidence>
<evidence type="ECO:0000256" key="8">
    <source>
        <dbReference type="SAM" id="MobiDB-lite"/>
    </source>
</evidence>
<evidence type="ECO:0000305" key="9"/>
<feature type="signal peptide" evidence="5">
    <location>
        <begin position="1"/>
        <end position="20"/>
    </location>
</feature>
<feature type="chain" id="PRO_0000014683" description="Contactin-1">
    <location>
        <begin position="21"/>
        <end position="999"/>
    </location>
</feature>
<feature type="propeptide" id="PRO_0000014684" description="Removed in mature form">
    <location>
        <begin position="1000"/>
        <end position="1018"/>
    </location>
</feature>
<feature type="domain" description="Ig-like C2-type 1">
    <location>
        <begin position="41"/>
        <end position="131"/>
    </location>
</feature>
<feature type="domain" description="Ig-like C2-type 2">
    <location>
        <begin position="137"/>
        <end position="223"/>
    </location>
</feature>
<feature type="domain" description="Ig-like C2-type 3">
    <location>
        <begin position="241"/>
        <end position="326"/>
    </location>
</feature>
<feature type="domain" description="Ig-like C2-type 4">
    <location>
        <begin position="331"/>
        <end position="407"/>
    </location>
</feature>
<feature type="domain" description="Ig-like C2-type 5">
    <location>
        <begin position="413"/>
        <end position="500"/>
    </location>
</feature>
<feature type="domain" description="Ig-like C2-type 6">
    <location>
        <begin position="504"/>
        <end position="601"/>
    </location>
</feature>
<feature type="domain" description="Fibronectin type-III 1" evidence="7">
    <location>
        <begin position="606"/>
        <end position="704"/>
    </location>
</feature>
<feature type="domain" description="Fibronectin type-III 2" evidence="7">
    <location>
        <begin position="709"/>
        <end position="806"/>
    </location>
</feature>
<feature type="domain" description="Fibronectin type-III 3" evidence="7">
    <location>
        <begin position="811"/>
        <end position="906"/>
    </location>
</feature>
<feature type="domain" description="Fibronectin type-III 4" evidence="7">
    <location>
        <begin position="907"/>
        <end position="1000"/>
    </location>
</feature>
<feature type="region of interest" description="Disordered" evidence="8">
    <location>
        <begin position="698"/>
        <end position="718"/>
    </location>
</feature>
<feature type="region of interest" description="Disordered" evidence="8">
    <location>
        <begin position="891"/>
        <end position="910"/>
    </location>
</feature>
<feature type="lipid moiety-binding region" description="GPI-anchor amidated serine" evidence="5">
    <location>
        <position position="999"/>
    </location>
</feature>
<feature type="glycosylation site" description="N-linked (GlcNAc...) asparagine" evidence="5">
    <location>
        <position position="208"/>
    </location>
</feature>
<feature type="glycosylation site" description="N-linked (GlcNAc...) asparagine" evidence="5">
    <location>
        <position position="258"/>
    </location>
</feature>
<feature type="glycosylation site" description="N-linked (GlcNAc...) asparagine" evidence="5">
    <location>
        <position position="338"/>
    </location>
</feature>
<feature type="glycosylation site" description="N-linked (GlcNAc...) asparagine" evidence="5">
    <location>
        <position position="457"/>
    </location>
</feature>
<feature type="glycosylation site" description="N-linked (GlcNAc...) asparagine" evidence="5">
    <location>
        <position position="473"/>
    </location>
</feature>
<feature type="glycosylation site" description="N-linked (GlcNAc...) asparagine" evidence="5">
    <location>
        <position position="494"/>
    </location>
</feature>
<feature type="glycosylation site" description="N-linked (GlcNAc...) asparagine" evidence="5">
    <location>
        <position position="521"/>
    </location>
</feature>
<feature type="glycosylation site" description="N-linked (GlcNAc...) asparagine" evidence="5">
    <location>
        <position position="591"/>
    </location>
</feature>
<feature type="disulfide bond" evidence="6">
    <location>
        <begin position="65"/>
        <end position="114"/>
    </location>
</feature>
<feature type="disulfide bond" evidence="6">
    <location>
        <begin position="158"/>
        <end position="211"/>
    </location>
</feature>
<feature type="disulfide bond" evidence="6">
    <location>
        <begin position="263"/>
        <end position="310"/>
    </location>
</feature>
<feature type="disulfide bond" evidence="6">
    <location>
        <begin position="352"/>
        <end position="391"/>
    </location>
</feature>
<feature type="disulfide bond" evidence="6">
    <location>
        <begin position="436"/>
        <end position="484"/>
    </location>
</feature>
<feature type="disulfide bond" evidence="6">
    <location>
        <begin position="526"/>
        <end position="583"/>
    </location>
</feature>
<keyword id="KW-0130">Cell adhesion</keyword>
<keyword id="KW-1003">Cell membrane</keyword>
<keyword id="KW-1015">Disulfide bond</keyword>
<keyword id="KW-0325">Glycoprotein</keyword>
<keyword id="KW-0336">GPI-anchor</keyword>
<keyword id="KW-0393">Immunoglobulin domain</keyword>
<keyword id="KW-0449">Lipoprotein</keyword>
<keyword id="KW-0472">Membrane</keyword>
<keyword id="KW-0914">Notch signaling pathway</keyword>
<keyword id="KW-1185">Reference proteome</keyword>
<keyword id="KW-0677">Repeat</keyword>
<keyword id="KW-0732">Signal</keyword>
<accession>Q28106</accession>
<proteinExistence type="evidence at transcript level"/>
<sequence>MKMWLLFSLLVIISFKTCLSEFTWHRRYGHGVSEEDKGFGPIFEEQPINTIYPEESPEGKVSLNCRARASPFPVYKWRMNNGDIDLTSDRYSMVGGNLVINNPDKQKDAGIYYCLASNNYGMVRSTEATLSFGYLDPFPPEERPEVRVKEGKGMVLLCDPPYHFPDDLSYRWLLNEFPVFITMDKRRFVSQTNGNLYIANVEASDKGNYSCFVSSPSITKSVFSKFIPLIPLPERTTKPYPADIVVQFKDVYALMGQNVTLECFALGNPVPDIRWRKVLEPMPSTAEISTSGAVLKIFNIQLEDEGIYECEAENNRGKDKHQARIYVQAFPEWVEHINDTEVDIGSDLYWPCVATGKPIPTIRWLKNGYSYHRGELRLYDVTFENAGMYQCIAENTHGAIYANAELKILALAPTFEMNPMKKKILAAKGGRVIIECKPKAAPKPTFLWSKGTERLVNSSRILIWEDGSLEINNITRSDGGVYTCFVENNKGKANSTGTLVITDPTRIILAPINADITVGENATMQCAASFDPALDLTFVWSFNGYVIDFNKENIHYQRNFMLDSNGELLIRNAQLKHAGRYTCTAQTIVDNSSASADLVVRGPPGPPGGLRIEDIRATSVALTWSRGSDNHSPISKYTIQTKTILSDDWKDAKTDPPIIEGNMEAARAVDLIPWMEYEFRVVATNTLGIGEPSIPSNKIKTDGAAPNVAPSDVGGGGGSNRELTITWAPLSREYHYFNNFGYIVAFKPFDGEEWKKVTVTNPDTGRYVHKDETMRPSTAFQVKVKAFNNKGDGPYSLTAVIHSAQDAPSEAPTAVGVKVLSSSEISVHWEHVVEKIVESYQIRYWASHDKEAAAHRVQVASQEYSARLENLLPDTQYFVEVRACNSAGCGPPSDMTETFTKKAPPSQPPRIISSVRSGSRYIITWDHVVALSNESTVTGYKVLYRPDGQHDGKLYSTHKHSIEVPIPRDGEYVVEVRAHSDGGDGVVSQVKISGASILSPCLLGFLLPALGILVYLEF</sequence>
<gene>
    <name type="primary">CNTN1</name>
</gene>
<dbReference type="EMBL" id="D32135">
    <property type="protein sequence ID" value="BAA06861.1"/>
    <property type="molecule type" value="mRNA"/>
</dbReference>
<dbReference type="PIR" id="JC4211">
    <property type="entry name" value="JC4211"/>
</dbReference>
<dbReference type="RefSeq" id="NP_776705.1">
    <property type="nucleotide sequence ID" value="NM_174280.2"/>
</dbReference>
<dbReference type="SMR" id="Q28106"/>
<dbReference type="FunCoup" id="Q28106">
    <property type="interactions" value="1608"/>
</dbReference>
<dbReference type="STRING" id="9913.ENSBTAP00000042896"/>
<dbReference type="GlyCosmos" id="Q28106">
    <property type="glycosylation" value="8 sites, No reported glycans"/>
</dbReference>
<dbReference type="GlyGen" id="Q28106">
    <property type="glycosylation" value="8 sites"/>
</dbReference>
<dbReference type="PaxDb" id="9913-ENSBTAP00000042896"/>
<dbReference type="GeneID" id="281705"/>
<dbReference type="KEGG" id="bta:281705"/>
<dbReference type="CTD" id="1272"/>
<dbReference type="eggNOG" id="KOG3513">
    <property type="taxonomic scope" value="Eukaryota"/>
</dbReference>
<dbReference type="InParanoid" id="Q28106"/>
<dbReference type="OrthoDB" id="6138780at2759"/>
<dbReference type="Proteomes" id="UP000009136">
    <property type="component" value="Unplaced"/>
</dbReference>
<dbReference type="GO" id="GO:0030424">
    <property type="term" value="C:axon"/>
    <property type="evidence" value="ECO:0000318"/>
    <property type="project" value="GO_Central"/>
</dbReference>
<dbReference type="GO" id="GO:0005886">
    <property type="term" value="C:plasma membrane"/>
    <property type="evidence" value="ECO:0000318"/>
    <property type="project" value="GO_Central"/>
</dbReference>
<dbReference type="GO" id="GO:0098552">
    <property type="term" value="C:side of membrane"/>
    <property type="evidence" value="ECO:0007669"/>
    <property type="project" value="UniProtKB-KW"/>
</dbReference>
<dbReference type="GO" id="GO:0098632">
    <property type="term" value="F:cell-cell adhesion mediator activity"/>
    <property type="evidence" value="ECO:0000318"/>
    <property type="project" value="GO_Central"/>
</dbReference>
<dbReference type="GO" id="GO:0007411">
    <property type="term" value="P:axon guidance"/>
    <property type="evidence" value="ECO:0000318"/>
    <property type="project" value="GO_Central"/>
</dbReference>
<dbReference type="GO" id="GO:0098609">
    <property type="term" value="P:cell-cell adhesion"/>
    <property type="evidence" value="ECO:0000318"/>
    <property type="project" value="GO_Central"/>
</dbReference>
<dbReference type="GO" id="GO:0007219">
    <property type="term" value="P:Notch signaling pathway"/>
    <property type="evidence" value="ECO:0007669"/>
    <property type="project" value="UniProtKB-KW"/>
</dbReference>
<dbReference type="CDD" id="cd00063">
    <property type="entry name" value="FN3"/>
    <property type="match status" value="4"/>
</dbReference>
<dbReference type="CDD" id="cd05727">
    <property type="entry name" value="Ig2_Contactin-2-like"/>
    <property type="match status" value="1"/>
</dbReference>
<dbReference type="CDD" id="cd04970">
    <property type="entry name" value="Ig6_Contactin"/>
    <property type="match status" value="1"/>
</dbReference>
<dbReference type="CDD" id="cd05849">
    <property type="entry name" value="IgI_1_Contactin-1"/>
    <property type="match status" value="1"/>
</dbReference>
<dbReference type="CDD" id="cd05851">
    <property type="entry name" value="IgI_3_Contactin-1"/>
    <property type="match status" value="1"/>
</dbReference>
<dbReference type="FunFam" id="2.60.40.10:FF:000035">
    <property type="entry name" value="Contactin 1"/>
    <property type="match status" value="1"/>
</dbReference>
<dbReference type="FunFam" id="2.60.40.10:FF:000044">
    <property type="entry name" value="Contactin 1"/>
    <property type="match status" value="1"/>
</dbReference>
<dbReference type="FunFam" id="2.60.40.10:FF:000047">
    <property type="entry name" value="Contactin 1"/>
    <property type="match status" value="1"/>
</dbReference>
<dbReference type="FunFam" id="2.60.40.10:FF:000052">
    <property type="entry name" value="Contactin 1"/>
    <property type="match status" value="1"/>
</dbReference>
<dbReference type="FunFam" id="2.60.40.10:FF:000054">
    <property type="entry name" value="Contactin 1"/>
    <property type="match status" value="1"/>
</dbReference>
<dbReference type="FunFam" id="2.60.40.10:FF:000064">
    <property type="entry name" value="Contactin 1"/>
    <property type="match status" value="1"/>
</dbReference>
<dbReference type="FunFam" id="2.60.40.10:FF:000526">
    <property type="entry name" value="Contactin 1"/>
    <property type="match status" value="1"/>
</dbReference>
<dbReference type="FunFam" id="2.60.40.10:FF:000004">
    <property type="entry name" value="DCC isoform 1"/>
    <property type="match status" value="2"/>
</dbReference>
<dbReference type="FunFam" id="2.60.40.10:FF:000005">
    <property type="entry name" value="Neuronal cell adhesion molecule"/>
    <property type="match status" value="1"/>
</dbReference>
<dbReference type="Gene3D" id="2.60.40.10">
    <property type="entry name" value="Immunoglobulins"/>
    <property type="match status" value="10"/>
</dbReference>
<dbReference type="InterPro" id="IPR047102">
    <property type="entry name" value="Contactin-1_2_Ig1"/>
</dbReference>
<dbReference type="InterPro" id="IPR036992">
    <property type="entry name" value="Contactin-1_Ig1"/>
</dbReference>
<dbReference type="InterPro" id="IPR047100">
    <property type="entry name" value="Contactin-1_Ig3"/>
</dbReference>
<dbReference type="InterPro" id="IPR047101">
    <property type="entry name" value="Contactin-1_Ig6"/>
</dbReference>
<dbReference type="InterPro" id="IPR003961">
    <property type="entry name" value="FN3_dom"/>
</dbReference>
<dbReference type="InterPro" id="IPR036116">
    <property type="entry name" value="FN3_sf"/>
</dbReference>
<dbReference type="InterPro" id="IPR007110">
    <property type="entry name" value="Ig-like_dom"/>
</dbReference>
<dbReference type="InterPro" id="IPR036179">
    <property type="entry name" value="Ig-like_dom_sf"/>
</dbReference>
<dbReference type="InterPro" id="IPR013783">
    <property type="entry name" value="Ig-like_fold"/>
</dbReference>
<dbReference type="InterPro" id="IPR013098">
    <property type="entry name" value="Ig_I-set"/>
</dbReference>
<dbReference type="InterPro" id="IPR003599">
    <property type="entry name" value="Ig_sub"/>
</dbReference>
<dbReference type="InterPro" id="IPR003598">
    <property type="entry name" value="Ig_sub2"/>
</dbReference>
<dbReference type="InterPro" id="IPR013151">
    <property type="entry name" value="Immunoglobulin_dom"/>
</dbReference>
<dbReference type="PANTHER" id="PTHR44170:SF10">
    <property type="entry name" value="CONTACTIN-1"/>
    <property type="match status" value="1"/>
</dbReference>
<dbReference type="PANTHER" id="PTHR44170">
    <property type="entry name" value="PROTEIN SIDEKICK"/>
    <property type="match status" value="1"/>
</dbReference>
<dbReference type="Pfam" id="PF00041">
    <property type="entry name" value="fn3"/>
    <property type="match status" value="2"/>
</dbReference>
<dbReference type="Pfam" id="PF07679">
    <property type="entry name" value="I-set"/>
    <property type="match status" value="2"/>
</dbReference>
<dbReference type="Pfam" id="PF00047">
    <property type="entry name" value="ig"/>
    <property type="match status" value="1"/>
</dbReference>
<dbReference type="Pfam" id="PF13927">
    <property type="entry name" value="Ig_3"/>
    <property type="match status" value="2"/>
</dbReference>
<dbReference type="SMART" id="SM00060">
    <property type="entry name" value="FN3"/>
    <property type="match status" value="4"/>
</dbReference>
<dbReference type="SMART" id="SM00409">
    <property type="entry name" value="IG"/>
    <property type="match status" value="6"/>
</dbReference>
<dbReference type="SMART" id="SM00408">
    <property type="entry name" value="IGc2"/>
    <property type="match status" value="5"/>
</dbReference>
<dbReference type="SUPFAM" id="SSF49265">
    <property type="entry name" value="Fibronectin type III"/>
    <property type="match status" value="2"/>
</dbReference>
<dbReference type="SUPFAM" id="SSF48726">
    <property type="entry name" value="Immunoglobulin"/>
    <property type="match status" value="6"/>
</dbReference>
<dbReference type="PROSITE" id="PS50853">
    <property type="entry name" value="FN3"/>
    <property type="match status" value="4"/>
</dbReference>
<dbReference type="PROSITE" id="PS50835">
    <property type="entry name" value="IG_LIKE"/>
    <property type="match status" value="6"/>
</dbReference>
<name>CNTN1_BOVIN</name>